<dbReference type="EMBL" id="CP000097">
    <property type="protein sequence ID" value="ABB25637.1"/>
    <property type="molecule type" value="Genomic_DNA"/>
</dbReference>
<dbReference type="RefSeq" id="WP_011359481.1">
    <property type="nucleotide sequence ID" value="NC_007513.1"/>
</dbReference>
<dbReference type="STRING" id="316279.Syncc9902_0669"/>
<dbReference type="KEGG" id="sye:Syncc9902_0669"/>
<dbReference type="eggNOG" id="ENOG502Z7YX">
    <property type="taxonomic scope" value="Bacteria"/>
</dbReference>
<dbReference type="HOGENOM" id="CLU_095465_0_0_3"/>
<dbReference type="OrthoDB" id="7059574at2"/>
<dbReference type="Proteomes" id="UP000002712">
    <property type="component" value="Chromosome"/>
</dbReference>
<dbReference type="GO" id="GO:0009522">
    <property type="term" value="C:photosystem I"/>
    <property type="evidence" value="ECO:0007669"/>
    <property type="project" value="InterPro"/>
</dbReference>
<dbReference type="GO" id="GO:0031676">
    <property type="term" value="C:plasma membrane-derived thylakoid membrane"/>
    <property type="evidence" value="ECO:0007669"/>
    <property type="project" value="UniProtKB-SubCell"/>
</dbReference>
<dbReference type="GO" id="GO:0015979">
    <property type="term" value="P:photosynthesis"/>
    <property type="evidence" value="ECO:0007669"/>
    <property type="project" value="UniProtKB-UniRule"/>
</dbReference>
<dbReference type="HAMAP" id="MF_00437">
    <property type="entry name" value="Ycf4"/>
    <property type="match status" value="1"/>
</dbReference>
<dbReference type="InterPro" id="IPR003359">
    <property type="entry name" value="PSI_Ycf4_assembly"/>
</dbReference>
<dbReference type="NCBIfam" id="NF002712">
    <property type="entry name" value="PRK02542.1"/>
    <property type="match status" value="1"/>
</dbReference>
<dbReference type="Pfam" id="PF02392">
    <property type="entry name" value="Ycf4"/>
    <property type="match status" value="1"/>
</dbReference>
<accession>Q3AZ40</accession>
<keyword id="KW-0472">Membrane</keyword>
<keyword id="KW-0602">Photosynthesis</keyword>
<keyword id="KW-1185">Reference proteome</keyword>
<keyword id="KW-0793">Thylakoid</keyword>
<keyword id="KW-0812">Transmembrane</keyword>
<keyword id="KW-1133">Transmembrane helix</keyword>
<evidence type="ECO:0000255" key="1">
    <source>
        <dbReference type="HAMAP-Rule" id="MF_00437"/>
    </source>
</evidence>
<proteinExistence type="inferred from homology"/>
<reference key="1">
    <citation type="submission" date="2005-08" db="EMBL/GenBank/DDBJ databases">
        <title>Complete sequence of Synechococcus sp. CC9902.</title>
        <authorList>
            <person name="Copeland A."/>
            <person name="Lucas S."/>
            <person name="Lapidus A."/>
            <person name="Barry K."/>
            <person name="Detter J.C."/>
            <person name="Glavina T."/>
            <person name="Hammon N."/>
            <person name="Israni S."/>
            <person name="Pitluck S."/>
            <person name="Martinez M."/>
            <person name="Schmutz J."/>
            <person name="Larimer F."/>
            <person name="Land M."/>
            <person name="Kyrpides N."/>
            <person name="Ivanova N."/>
            <person name="Richardson P."/>
        </authorList>
    </citation>
    <scope>NUCLEOTIDE SEQUENCE [LARGE SCALE GENOMIC DNA]</scope>
    <source>
        <strain>CC9902</strain>
    </source>
</reference>
<organism>
    <name type="scientific">Synechococcus sp. (strain CC9902)</name>
    <dbReference type="NCBI Taxonomy" id="316279"/>
    <lineage>
        <taxon>Bacteria</taxon>
        <taxon>Bacillati</taxon>
        <taxon>Cyanobacteriota</taxon>
        <taxon>Cyanophyceae</taxon>
        <taxon>Synechococcales</taxon>
        <taxon>Synechococcaceae</taxon>
        <taxon>Synechococcus</taxon>
    </lineage>
</organism>
<name>YCF4_SYNS9</name>
<protein>
    <recommendedName>
        <fullName evidence="1">Photosystem I assembly protein Ycf4</fullName>
    </recommendedName>
</protein>
<feature type="chain" id="PRO_0000325985" description="Photosystem I assembly protein Ycf4">
    <location>
        <begin position="1"/>
        <end position="178"/>
    </location>
</feature>
<feature type="transmembrane region" description="Helical" evidence="1">
    <location>
        <begin position="19"/>
        <end position="39"/>
    </location>
</feature>
<feature type="transmembrane region" description="Helical" evidence="1">
    <location>
        <begin position="61"/>
        <end position="81"/>
    </location>
</feature>
<sequence length="178" mass="19165">MSAAVLEQSVLGSRRLSNFLVAAAVSVGGVGFLLASLSSYLGQDLLPFGHPAALIFVPQGLVMGLYSIAAALLASYLWYVIAVDVGSGSNRFDKESGVVVISRRGFRRPVCVEFPLKDVKAVKVEVRDGFNARRRVSLRLQGRRDLPLTRVGEPLPLAQLEQEGAELARFLGVNLEGL</sequence>
<comment type="function">
    <text evidence="1">Seems to be required for the assembly of the photosystem I complex.</text>
</comment>
<comment type="subcellular location">
    <subcellularLocation>
        <location evidence="1">Cellular thylakoid membrane</location>
        <topology evidence="1">Multi-pass membrane protein</topology>
    </subcellularLocation>
</comment>
<comment type="similarity">
    <text evidence="1">Belongs to the Ycf4 family.</text>
</comment>
<gene>
    <name evidence="1" type="primary">ycf4</name>
    <name type="ordered locus">Syncc9902_0669</name>
</gene>